<comment type="function">
    <text evidence="2 3">No alpha-1,4-glucan hydrolase activity, including beta-amylase, alpha-amylase, a-glucosidase or alpha-amyloglucosidase. However, facilitates or regulates starch breakdown, especially at night, by a mechanism involving direct interaction with starch or other alpha-1,4-glucan.</text>
</comment>
<comment type="subcellular location">
    <subcellularLocation>
        <location evidence="2">Plastid</location>
        <location evidence="2">Chloroplast</location>
    </subcellularLocation>
</comment>
<comment type="alternative products">
    <event type="alternative splicing"/>
    <isoform>
        <id>Q9FM68-1</id>
        <name>1</name>
        <sequence type="displayed"/>
    </isoform>
    <text>A number of isoforms are produced. According to EST sequences.</text>
</comment>
<comment type="tissue specificity">
    <text evidence="4">Preferentially expressed in vascular tissue of cotyledons, leaves, petioles, stems, petals, siliques and roots, particularly in phloem. Also present in root tip.</text>
</comment>
<comment type="disruption phenotype">
    <text evidence="2">Slightly retarded growth rate and reduced starch breakdown in leaves during the night.</text>
</comment>
<comment type="similarity">
    <text evidence="5">Belongs to the glycosyl hydrolase 14 family.</text>
</comment>
<comment type="caution">
    <text evidence="5">In contrast to other members of the family, lacks the conserved Glu active site in position 473, which is replaced by an Arg residue, explaining why it is inactive.</text>
</comment>
<comment type="sequence caution" evidence="5">
    <conflict type="erroneous initiation">
        <sequence resource="EMBL-CDS" id="AAK76508"/>
    </conflict>
    <text>Truncated N-terminus.</text>
</comment>
<feature type="transit peptide" description="Chloroplast" evidence="1">
    <location>
        <begin position="1"/>
        <end position="62"/>
    </location>
</feature>
<feature type="chain" id="PRO_0000393419" description="Inactive beta-amylase 4, chloroplastic">
    <location>
        <begin position="63"/>
        <end position="531"/>
    </location>
</feature>
<protein>
    <recommendedName>
        <fullName>Inactive beta-amylase 4, chloroplastic</fullName>
    </recommendedName>
    <alternativeName>
        <fullName>Inactive beta-amylase 6</fullName>
    </alternativeName>
</protein>
<name>BAM4_ARATH</name>
<accession>Q9FM68</accession>
<accession>B9DHR3</accession>
<accession>Q94AS2</accession>
<organism>
    <name type="scientific">Arabidopsis thaliana</name>
    <name type="common">Mouse-ear cress</name>
    <dbReference type="NCBI Taxonomy" id="3702"/>
    <lineage>
        <taxon>Eukaryota</taxon>
        <taxon>Viridiplantae</taxon>
        <taxon>Streptophyta</taxon>
        <taxon>Embryophyta</taxon>
        <taxon>Tracheophyta</taxon>
        <taxon>Spermatophyta</taxon>
        <taxon>Magnoliopsida</taxon>
        <taxon>eudicotyledons</taxon>
        <taxon>Gunneridae</taxon>
        <taxon>Pentapetalae</taxon>
        <taxon>rosids</taxon>
        <taxon>malvids</taxon>
        <taxon>Brassicales</taxon>
        <taxon>Brassicaceae</taxon>
        <taxon>Camelineae</taxon>
        <taxon>Arabidopsis</taxon>
    </lineage>
</organism>
<evidence type="ECO:0000255" key="1"/>
<evidence type="ECO:0000269" key="2">
    <source>
    </source>
</evidence>
<evidence type="ECO:0000269" key="3">
    <source>
    </source>
</evidence>
<evidence type="ECO:0000269" key="4">
    <source>
    </source>
</evidence>
<evidence type="ECO:0000305" key="5"/>
<gene>
    <name type="primary">BAM4</name>
    <name type="synonym">BMY6</name>
    <name type="ordered locus">At5g55700</name>
    <name type="ORF">MDF20.14</name>
</gene>
<proteinExistence type="evidence at transcript level"/>
<dbReference type="EMBL" id="AB009050">
    <property type="protein sequence ID" value="BAB09237.1"/>
    <property type="molecule type" value="Genomic_DNA"/>
</dbReference>
<dbReference type="EMBL" id="CP002688">
    <property type="protein sequence ID" value="AED96669.1"/>
    <property type="molecule type" value="Genomic_DNA"/>
</dbReference>
<dbReference type="EMBL" id="AY045834">
    <property type="protein sequence ID" value="AAK76508.1"/>
    <property type="status" value="ALT_INIT"/>
    <property type="molecule type" value="mRNA"/>
</dbReference>
<dbReference type="EMBL" id="BT001909">
    <property type="protein sequence ID" value="AAN71908.1"/>
    <property type="molecule type" value="mRNA"/>
</dbReference>
<dbReference type="EMBL" id="AK317617">
    <property type="protein sequence ID" value="BAH20280.1"/>
    <property type="molecule type" value="mRNA"/>
</dbReference>
<dbReference type="RefSeq" id="NP_568829.2">
    <molecule id="Q9FM68-1"/>
    <property type="nucleotide sequence ID" value="NM_124952.5"/>
</dbReference>
<dbReference type="SMR" id="Q9FM68"/>
<dbReference type="BioGRID" id="20908">
    <property type="interactions" value="1"/>
</dbReference>
<dbReference type="FunCoup" id="Q9FM68">
    <property type="interactions" value="22"/>
</dbReference>
<dbReference type="STRING" id="3702.Q9FM68"/>
<dbReference type="CAZy" id="GH14">
    <property type="family name" value="Glycoside Hydrolase Family 14"/>
</dbReference>
<dbReference type="PaxDb" id="3702-AT5G55700.1"/>
<dbReference type="ProteomicsDB" id="240772">
    <molecule id="Q9FM68-1"/>
</dbReference>
<dbReference type="EnsemblPlants" id="AT5G55700.1">
    <molecule id="Q9FM68-1"/>
    <property type="protein sequence ID" value="AT5G55700.1"/>
    <property type="gene ID" value="AT5G55700"/>
</dbReference>
<dbReference type="GeneID" id="835664"/>
<dbReference type="Gramene" id="AT5G55700.1">
    <molecule id="Q9FM68-1"/>
    <property type="protein sequence ID" value="AT5G55700.1"/>
    <property type="gene ID" value="AT5G55700"/>
</dbReference>
<dbReference type="KEGG" id="ath:AT5G55700"/>
<dbReference type="Araport" id="AT5G55700"/>
<dbReference type="TAIR" id="AT5G55700">
    <property type="gene designation" value="BAM4"/>
</dbReference>
<dbReference type="eggNOG" id="ENOG502QRDP">
    <property type="taxonomic scope" value="Eukaryota"/>
</dbReference>
<dbReference type="HOGENOM" id="CLU_016754_5_1_1"/>
<dbReference type="InParanoid" id="Q9FM68"/>
<dbReference type="OMA" id="PFVRKMS"/>
<dbReference type="PhylomeDB" id="Q9FM68"/>
<dbReference type="PRO" id="PR:Q9FM68"/>
<dbReference type="Proteomes" id="UP000006548">
    <property type="component" value="Chromosome 5"/>
</dbReference>
<dbReference type="ExpressionAtlas" id="Q9FM68">
    <property type="expression patterns" value="baseline and differential"/>
</dbReference>
<dbReference type="GO" id="GO:0009507">
    <property type="term" value="C:chloroplast"/>
    <property type="evidence" value="ECO:0000314"/>
    <property type="project" value="TAIR"/>
</dbReference>
<dbReference type="GO" id="GO:0005983">
    <property type="term" value="P:starch catabolic process"/>
    <property type="evidence" value="ECO:0000315"/>
    <property type="project" value="TAIR"/>
</dbReference>
<dbReference type="FunFam" id="3.20.20.80:FF:000184">
    <property type="entry name" value="Beta-amylase"/>
    <property type="match status" value="1"/>
</dbReference>
<dbReference type="Gene3D" id="3.20.20.80">
    <property type="entry name" value="Glycosidases"/>
    <property type="match status" value="1"/>
</dbReference>
<dbReference type="InterPro" id="IPR001554">
    <property type="entry name" value="Glyco_hydro_14"/>
</dbReference>
<dbReference type="InterPro" id="IPR001371">
    <property type="entry name" value="Glyco_hydro_14B_pln"/>
</dbReference>
<dbReference type="InterPro" id="IPR017853">
    <property type="entry name" value="Glycoside_hydrolase_SF"/>
</dbReference>
<dbReference type="PANTHER" id="PTHR31352">
    <property type="entry name" value="BETA-AMYLASE 1, CHLOROPLASTIC"/>
    <property type="match status" value="1"/>
</dbReference>
<dbReference type="PANTHER" id="PTHR31352:SF37">
    <property type="entry name" value="INACTIVE BETA-AMYLASE 4, CHLOROPLASTIC"/>
    <property type="match status" value="1"/>
</dbReference>
<dbReference type="Pfam" id="PF01373">
    <property type="entry name" value="Glyco_hydro_14"/>
    <property type="match status" value="1"/>
</dbReference>
<dbReference type="PRINTS" id="PR00750">
    <property type="entry name" value="BETAAMYLASE"/>
</dbReference>
<dbReference type="PRINTS" id="PR00842">
    <property type="entry name" value="GLHYDLASE14B"/>
</dbReference>
<dbReference type="SUPFAM" id="SSF51445">
    <property type="entry name" value="(Trans)glycosidases"/>
    <property type="match status" value="1"/>
</dbReference>
<sequence>MTETGVIGCGCRGVTGGNFFHPGGFSLKSCFLEQSTKRNRNFFRSVSMIPPFKRGRFITKLRSVAGNSRIFSMDAREKSRSFVLVSSRHKRVPVFVMMPIDTFGIDASGCPKIKRLKALTVSLKALKLAGVHGIAVEVWWGIVERFSPLEFKWSLYEELFRLISEAGLKLHVALCFHSNMHLFGGKGGISLPLWIREIGDVNKDIYYRDKSGFSNNDYLTLGVDQLPLFGGRTAVQCYEDFMLSFSTKFEPYLGNVIEEISIGLGPSGELRYPAHPSGDGRWKFPGIGEFQCHDKYMMEDLMAVASQEGKPQWGSRDPPNTGCYNSFPSGVPFFEEGNDSFLSDYGRFFLEWYSGKLICHADAILAKAADVLRRRQEEEKSSVMLVAKIGGIYWWYKTSSHPAELTAGYYNTSLRDGYDPVASVLSRHGAALNIPCLDMADSEIPEKYLCSPEGLRRQIHDVSKKWTIHVTGRNTSERFDEMGLRQIRENCVQPNGDTLRSFTFCRMNEKIFRVENWNNFVPFIRQMSADM</sequence>
<reference key="1">
    <citation type="journal article" date="1998" name="DNA Res.">
        <title>Structural analysis of Arabidopsis thaliana chromosome 5. IV. Sequence features of the regions of 1,456,315 bp covered by nineteen physically assigned P1 and TAC clones.</title>
        <authorList>
            <person name="Sato S."/>
            <person name="Kaneko T."/>
            <person name="Kotani H."/>
            <person name="Nakamura Y."/>
            <person name="Asamizu E."/>
            <person name="Miyajima N."/>
            <person name="Tabata S."/>
        </authorList>
    </citation>
    <scope>NUCLEOTIDE SEQUENCE [LARGE SCALE GENOMIC DNA]</scope>
    <source>
        <strain>cv. Columbia</strain>
    </source>
</reference>
<reference key="2">
    <citation type="journal article" date="2017" name="Plant J.">
        <title>Araport11: a complete reannotation of the Arabidopsis thaliana reference genome.</title>
        <authorList>
            <person name="Cheng C.Y."/>
            <person name="Krishnakumar V."/>
            <person name="Chan A.P."/>
            <person name="Thibaud-Nissen F."/>
            <person name="Schobel S."/>
            <person name="Town C.D."/>
        </authorList>
    </citation>
    <scope>GENOME REANNOTATION</scope>
    <source>
        <strain>cv. Columbia</strain>
    </source>
</reference>
<reference key="3">
    <citation type="journal article" date="2003" name="Science">
        <title>Empirical analysis of transcriptional activity in the Arabidopsis genome.</title>
        <authorList>
            <person name="Yamada K."/>
            <person name="Lim J."/>
            <person name="Dale J.M."/>
            <person name="Chen H."/>
            <person name="Shinn P."/>
            <person name="Palm C.J."/>
            <person name="Southwick A.M."/>
            <person name="Wu H.C."/>
            <person name="Kim C.J."/>
            <person name="Nguyen M."/>
            <person name="Pham P.K."/>
            <person name="Cheuk R.F."/>
            <person name="Karlin-Newmann G."/>
            <person name="Liu S.X."/>
            <person name="Lam B."/>
            <person name="Sakano H."/>
            <person name="Wu T."/>
            <person name="Yu G."/>
            <person name="Miranda M."/>
            <person name="Quach H.L."/>
            <person name="Tripp M."/>
            <person name="Chang C.H."/>
            <person name="Lee J.M."/>
            <person name="Toriumi M.J."/>
            <person name="Chan M.M."/>
            <person name="Tang C.C."/>
            <person name="Onodera C.S."/>
            <person name="Deng J.M."/>
            <person name="Akiyama K."/>
            <person name="Ansari Y."/>
            <person name="Arakawa T."/>
            <person name="Banh J."/>
            <person name="Banno F."/>
            <person name="Bowser L."/>
            <person name="Brooks S.Y."/>
            <person name="Carninci P."/>
            <person name="Chao Q."/>
            <person name="Choy N."/>
            <person name="Enju A."/>
            <person name="Goldsmith A.D."/>
            <person name="Gurjal M."/>
            <person name="Hansen N.F."/>
            <person name="Hayashizaki Y."/>
            <person name="Johnson-Hopson C."/>
            <person name="Hsuan V.W."/>
            <person name="Iida K."/>
            <person name="Karnes M."/>
            <person name="Khan S."/>
            <person name="Koesema E."/>
            <person name="Ishida J."/>
            <person name="Jiang P.X."/>
            <person name="Jones T."/>
            <person name="Kawai J."/>
            <person name="Kamiya A."/>
            <person name="Meyers C."/>
            <person name="Nakajima M."/>
            <person name="Narusaka M."/>
            <person name="Seki M."/>
            <person name="Sakurai T."/>
            <person name="Satou M."/>
            <person name="Tamse R."/>
            <person name="Vaysberg M."/>
            <person name="Wallender E.K."/>
            <person name="Wong C."/>
            <person name="Yamamura Y."/>
            <person name="Yuan S."/>
            <person name="Shinozaki K."/>
            <person name="Davis R.W."/>
            <person name="Theologis A."/>
            <person name="Ecker J.R."/>
        </authorList>
    </citation>
    <scope>NUCLEOTIDE SEQUENCE [LARGE SCALE MRNA] OF 34-531</scope>
    <source>
        <strain>cv. Columbia</strain>
    </source>
</reference>
<reference key="4">
    <citation type="journal article" date="2009" name="DNA Res.">
        <title>Analysis of multiple occurrences of alternative splicing events in Arabidopsis thaliana using novel sequenced full-length cDNAs.</title>
        <authorList>
            <person name="Iida K."/>
            <person name="Fukami-Kobayashi K."/>
            <person name="Toyoda A."/>
            <person name="Sakaki Y."/>
            <person name="Kobayashi M."/>
            <person name="Seki M."/>
            <person name="Shinozaki K."/>
        </authorList>
    </citation>
    <scope>NUCLEOTIDE SEQUENCE [LARGE SCALE MRNA] OF 34-531</scope>
    <source>
        <strain>cv. Columbia</strain>
    </source>
</reference>
<reference key="5">
    <citation type="journal article" date="2008" name="Plant Cell">
        <title>Beta-AMYLASE4, a noncatalytic protein required for starch breakdown, acts upstream of three active beta-amylases in Arabidopsis chloroplasts.</title>
        <authorList>
            <person name="Fulton D.C."/>
            <person name="Stettler M."/>
            <person name="Mettler T."/>
            <person name="Vaughan C.K."/>
            <person name="Li J."/>
            <person name="Francisco P."/>
            <person name="Gil M."/>
            <person name="Reinhold H."/>
            <person name="Eicke S."/>
            <person name="Messerli G."/>
            <person name="Dorken G."/>
            <person name="Halliday K."/>
            <person name="Smith A.M."/>
            <person name="Smith S.M."/>
            <person name="Zeeman S.C."/>
        </authorList>
    </citation>
    <scope>FUNCTION</scope>
    <scope>SUBCELLULAR LOCATION</scope>
    <scope>DISRUPTION PHENOTYPE</scope>
    <scope>GENE FAMILY</scope>
    <scope>NOMENCLATURE</scope>
</reference>
<reference key="6">
    <citation type="journal article" date="2009" name="Arch. Biochem. Biophys.">
        <title>Catalytically-inactive beta-amylase BAM4 required for starch breakdown in Arabidopsis leaves is a starch-binding-protein.</title>
        <authorList>
            <person name="Li J."/>
            <person name="Francisco P."/>
            <person name="Zhou W."/>
            <person name="Edner C."/>
            <person name="Steup M."/>
            <person name="Ritte G."/>
            <person name="Bond C.S."/>
            <person name="Smith S.M."/>
        </authorList>
    </citation>
    <scope>FUNCTION</scope>
</reference>
<reference key="7">
    <citation type="journal article" date="2010" name="J. Plant Physiol.">
        <title>The gene encoding the catalytically inactive beta-amylase BAM4 involved in starch breakdown in Arabidopsis leaves is expressed preferentially in vascular tissues in source and sink organs.</title>
        <authorList>
            <person name="Francisco P."/>
            <person name="Li J."/>
            <person name="Smith S.M."/>
        </authorList>
    </citation>
    <scope>TISSUE SPECIFICITY</scope>
</reference>
<keyword id="KW-0025">Alternative splicing</keyword>
<keyword id="KW-0119">Carbohydrate metabolism</keyword>
<keyword id="KW-0150">Chloroplast</keyword>
<keyword id="KW-0934">Plastid</keyword>
<keyword id="KW-0624">Polysaccharide degradation</keyword>
<keyword id="KW-1185">Reference proteome</keyword>
<keyword id="KW-0809">Transit peptide</keyword>